<evidence type="ECO:0000255" key="1">
    <source>
        <dbReference type="HAMAP-Rule" id="MF_01543"/>
    </source>
</evidence>
<accession>B9J7E8</accession>
<sequence>MATVKSDIEIARAAKKLPIIEIGAKLGIPAEDLAPYGHDKAKIGAQFIAALKDKPDGKLILVTAINPTPAGEGKTTTTVGLGDGLNRIGKKAIVCVREASLGPCFGVKGGAAGGGYAQVIPMEDINLHFTGDFHAVTSAHNLLAALIDNHIYWGNEENIDVRRITWRRAMDMNDRALRDIVASLGGVANGYPREGGFDITVASEVMAILCLASDLKDLEKRLGDIIIGYRRDRTPVYARDLKADGAMAVLLKDAMQPNLVQTLENNPALVHGGPFANIAHGCNSVIATRTALKLADYVVTEAGFGADLGAEKFFDIKCRKAGLAPDAAVIVATVRALKMNGGVKKDDLGQENVEALVKGCANLGRHLANVRKFGVPVVVAINHFVSDTNAEIEAVKNYVARLGAEAILCRHWAEGSAGIEELAYKVVELAESGQAKFQPLYPDNLPLLEKIEIVASKIYHAGEVTADKAVRDQLRSWEDQGYGYLPVCMAKTQYSFSTDPNVRGAPEGHIVQVREVRLSAGAGFVVVITGEIMTMPGLPKAPAAERIFLNDQGYIEGLF</sequence>
<dbReference type="EC" id="6.3.4.3" evidence="1"/>
<dbReference type="EMBL" id="CP000628">
    <property type="protein sequence ID" value="ACM27255.1"/>
    <property type="molecule type" value="Genomic_DNA"/>
</dbReference>
<dbReference type="RefSeq" id="WP_012651982.1">
    <property type="nucleotide sequence ID" value="NC_011985.1"/>
</dbReference>
<dbReference type="SMR" id="B9J7E8"/>
<dbReference type="STRING" id="311403.Arad_3259"/>
<dbReference type="KEGG" id="ara:Arad_3259"/>
<dbReference type="eggNOG" id="COG2759">
    <property type="taxonomic scope" value="Bacteria"/>
</dbReference>
<dbReference type="HOGENOM" id="CLU_003601_3_3_5"/>
<dbReference type="UniPathway" id="UPA00193"/>
<dbReference type="Proteomes" id="UP000001600">
    <property type="component" value="Chromosome 1"/>
</dbReference>
<dbReference type="GO" id="GO:0005524">
    <property type="term" value="F:ATP binding"/>
    <property type="evidence" value="ECO:0007669"/>
    <property type="project" value="UniProtKB-UniRule"/>
</dbReference>
<dbReference type="GO" id="GO:0004329">
    <property type="term" value="F:formate-tetrahydrofolate ligase activity"/>
    <property type="evidence" value="ECO:0007669"/>
    <property type="project" value="UniProtKB-UniRule"/>
</dbReference>
<dbReference type="GO" id="GO:0035999">
    <property type="term" value="P:tetrahydrofolate interconversion"/>
    <property type="evidence" value="ECO:0007669"/>
    <property type="project" value="UniProtKB-UniRule"/>
</dbReference>
<dbReference type="CDD" id="cd00477">
    <property type="entry name" value="FTHFS"/>
    <property type="match status" value="1"/>
</dbReference>
<dbReference type="FunFam" id="3.30.1510.10:FF:000001">
    <property type="entry name" value="Formate--tetrahydrofolate ligase"/>
    <property type="match status" value="1"/>
</dbReference>
<dbReference type="FunFam" id="3.10.410.10:FF:000001">
    <property type="entry name" value="Putative formate--tetrahydrofolate ligase"/>
    <property type="match status" value="1"/>
</dbReference>
<dbReference type="Gene3D" id="3.30.1510.10">
    <property type="entry name" value="Domain 2, N(10)-formyltetrahydrofolate synthetase"/>
    <property type="match status" value="1"/>
</dbReference>
<dbReference type="Gene3D" id="3.10.410.10">
    <property type="entry name" value="Formyltetrahydrofolate synthetase, domain 3"/>
    <property type="match status" value="1"/>
</dbReference>
<dbReference type="Gene3D" id="3.40.50.300">
    <property type="entry name" value="P-loop containing nucleotide triphosphate hydrolases"/>
    <property type="match status" value="1"/>
</dbReference>
<dbReference type="HAMAP" id="MF_01543">
    <property type="entry name" value="FTHFS"/>
    <property type="match status" value="1"/>
</dbReference>
<dbReference type="InterPro" id="IPR000559">
    <property type="entry name" value="Formate_THF_ligase"/>
</dbReference>
<dbReference type="InterPro" id="IPR020628">
    <property type="entry name" value="Formate_THF_ligase_CS"/>
</dbReference>
<dbReference type="InterPro" id="IPR027417">
    <property type="entry name" value="P-loop_NTPase"/>
</dbReference>
<dbReference type="NCBIfam" id="NF010030">
    <property type="entry name" value="PRK13505.1"/>
    <property type="match status" value="1"/>
</dbReference>
<dbReference type="Pfam" id="PF01268">
    <property type="entry name" value="FTHFS"/>
    <property type="match status" value="1"/>
</dbReference>
<dbReference type="SUPFAM" id="SSF52540">
    <property type="entry name" value="P-loop containing nucleoside triphosphate hydrolases"/>
    <property type="match status" value="1"/>
</dbReference>
<dbReference type="PROSITE" id="PS00721">
    <property type="entry name" value="FTHFS_1"/>
    <property type="match status" value="1"/>
</dbReference>
<dbReference type="PROSITE" id="PS00722">
    <property type="entry name" value="FTHFS_2"/>
    <property type="match status" value="1"/>
</dbReference>
<protein>
    <recommendedName>
        <fullName evidence="1">Formate--tetrahydrofolate ligase</fullName>
        <ecNumber evidence="1">6.3.4.3</ecNumber>
    </recommendedName>
    <alternativeName>
        <fullName evidence="1">Formyltetrahydrofolate synthetase</fullName>
        <shortName evidence="1">FHS</shortName>
        <shortName evidence="1">FTHFS</shortName>
    </alternativeName>
</protein>
<keyword id="KW-0067">ATP-binding</keyword>
<keyword id="KW-0436">Ligase</keyword>
<keyword id="KW-0547">Nucleotide-binding</keyword>
<keyword id="KW-0554">One-carbon metabolism</keyword>
<reference key="1">
    <citation type="journal article" date="2009" name="J. Bacteriol.">
        <title>Genome sequences of three Agrobacterium biovars help elucidate the evolution of multichromosome genomes in bacteria.</title>
        <authorList>
            <person name="Slater S.C."/>
            <person name="Goldman B.S."/>
            <person name="Goodner B."/>
            <person name="Setubal J.C."/>
            <person name="Farrand S.K."/>
            <person name="Nester E.W."/>
            <person name="Burr T.J."/>
            <person name="Banta L."/>
            <person name="Dickerman A.W."/>
            <person name="Paulsen I."/>
            <person name="Otten L."/>
            <person name="Suen G."/>
            <person name="Welch R."/>
            <person name="Almeida N.F."/>
            <person name="Arnold F."/>
            <person name="Burton O.T."/>
            <person name="Du Z."/>
            <person name="Ewing A."/>
            <person name="Godsy E."/>
            <person name="Heisel S."/>
            <person name="Houmiel K.L."/>
            <person name="Jhaveri J."/>
            <person name="Lu J."/>
            <person name="Miller N.M."/>
            <person name="Norton S."/>
            <person name="Chen Q."/>
            <person name="Phoolcharoen W."/>
            <person name="Ohlin V."/>
            <person name="Ondrusek D."/>
            <person name="Pride N."/>
            <person name="Stricklin S.L."/>
            <person name="Sun J."/>
            <person name="Wheeler C."/>
            <person name="Wilson L."/>
            <person name="Zhu H."/>
            <person name="Wood D.W."/>
        </authorList>
    </citation>
    <scope>NUCLEOTIDE SEQUENCE [LARGE SCALE GENOMIC DNA]</scope>
    <source>
        <strain>K84 / ATCC BAA-868</strain>
    </source>
</reference>
<feature type="chain" id="PRO_1000185241" description="Formate--tetrahydrofolate ligase">
    <location>
        <begin position="1"/>
        <end position="559"/>
    </location>
</feature>
<feature type="binding site" evidence="1">
    <location>
        <begin position="68"/>
        <end position="75"/>
    </location>
    <ligand>
        <name>ATP</name>
        <dbReference type="ChEBI" id="CHEBI:30616"/>
    </ligand>
</feature>
<comment type="catalytic activity">
    <reaction evidence="1">
        <text>(6S)-5,6,7,8-tetrahydrofolate + formate + ATP = (6R)-10-formyltetrahydrofolate + ADP + phosphate</text>
        <dbReference type="Rhea" id="RHEA:20221"/>
        <dbReference type="ChEBI" id="CHEBI:15740"/>
        <dbReference type="ChEBI" id="CHEBI:30616"/>
        <dbReference type="ChEBI" id="CHEBI:43474"/>
        <dbReference type="ChEBI" id="CHEBI:57453"/>
        <dbReference type="ChEBI" id="CHEBI:195366"/>
        <dbReference type="ChEBI" id="CHEBI:456216"/>
        <dbReference type="EC" id="6.3.4.3"/>
    </reaction>
</comment>
<comment type="pathway">
    <text evidence="1">One-carbon metabolism; tetrahydrofolate interconversion.</text>
</comment>
<comment type="similarity">
    <text evidence="1">Belongs to the formate--tetrahydrofolate ligase family.</text>
</comment>
<gene>
    <name evidence="1" type="primary">fhs</name>
    <name type="ordered locus">Arad_3259</name>
</gene>
<organism>
    <name type="scientific">Rhizobium rhizogenes (strain K84 / ATCC BAA-868)</name>
    <name type="common">Agrobacterium radiobacter</name>
    <dbReference type="NCBI Taxonomy" id="311403"/>
    <lineage>
        <taxon>Bacteria</taxon>
        <taxon>Pseudomonadati</taxon>
        <taxon>Pseudomonadota</taxon>
        <taxon>Alphaproteobacteria</taxon>
        <taxon>Hyphomicrobiales</taxon>
        <taxon>Rhizobiaceae</taxon>
        <taxon>Rhizobium/Agrobacterium group</taxon>
        <taxon>Rhizobium</taxon>
    </lineage>
</organism>
<proteinExistence type="inferred from homology"/>
<name>FTHS_RHIR8</name>